<protein>
    <recommendedName>
        <fullName evidence="1">Co-chaperonin GroES</fullName>
    </recommendedName>
    <alternativeName>
        <fullName evidence="1">10 kDa chaperonin</fullName>
    </alternativeName>
    <alternativeName>
        <fullName evidence="1">Chaperonin-10</fullName>
        <shortName evidence="1">Cpn10</shortName>
    </alternativeName>
</protein>
<gene>
    <name evidence="1" type="primary">groES</name>
    <name evidence="1" type="synonym">groS</name>
    <name type="ordered locus">ECDH10B_4335</name>
</gene>
<name>CH10_ECODH</name>
<proteinExistence type="inferred from homology"/>
<accession>B1XDP6</accession>
<evidence type="ECO:0000255" key="1">
    <source>
        <dbReference type="HAMAP-Rule" id="MF_00580"/>
    </source>
</evidence>
<comment type="function">
    <text evidence="1">Together with the chaperonin GroEL, plays an essential role in assisting protein folding. The GroEL-GroES system forms a nano-cage that allows encapsulation of the non-native substrate proteins and provides a physical environment optimized to promote and accelerate protein folding. GroES binds to the apical surface of the GroEL ring, thereby capping the opening of the GroEL channel.</text>
</comment>
<comment type="subunit">
    <text evidence="1">Heptamer of 7 subunits arranged in a ring. Interacts with the chaperonin GroEL.</text>
</comment>
<comment type="subcellular location">
    <subcellularLocation>
        <location evidence="1">Cytoplasm</location>
    </subcellularLocation>
</comment>
<comment type="similarity">
    <text evidence="1">Belongs to the GroES chaperonin family.</text>
</comment>
<feature type="chain" id="PRO_1000129655" description="Co-chaperonin GroES">
    <location>
        <begin position="1"/>
        <end position="97"/>
    </location>
</feature>
<sequence>MNIRPLHDRVIVKRKEVETKSAGGIVLTGSAAAKSTRGEVLAVGNGRILENGEVKPLDVKVGDIVIFNDGYGVKSEKIDNEEVLIMSESDILAIVEA</sequence>
<keyword id="KW-0143">Chaperone</keyword>
<keyword id="KW-0963">Cytoplasm</keyword>
<organism>
    <name type="scientific">Escherichia coli (strain K12 / DH10B)</name>
    <dbReference type="NCBI Taxonomy" id="316385"/>
    <lineage>
        <taxon>Bacteria</taxon>
        <taxon>Pseudomonadati</taxon>
        <taxon>Pseudomonadota</taxon>
        <taxon>Gammaproteobacteria</taxon>
        <taxon>Enterobacterales</taxon>
        <taxon>Enterobacteriaceae</taxon>
        <taxon>Escherichia</taxon>
    </lineage>
</organism>
<reference key="1">
    <citation type="journal article" date="2008" name="J. Bacteriol.">
        <title>The complete genome sequence of Escherichia coli DH10B: insights into the biology of a laboratory workhorse.</title>
        <authorList>
            <person name="Durfee T."/>
            <person name="Nelson R."/>
            <person name="Baldwin S."/>
            <person name="Plunkett G. III"/>
            <person name="Burland V."/>
            <person name="Mau B."/>
            <person name="Petrosino J.F."/>
            <person name="Qin X."/>
            <person name="Muzny D.M."/>
            <person name="Ayele M."/>
            <person name="Gibbs R.A."/>
            <person name="Csorgo B."/>
            <person name="Posfai G."/>
            <person name="Weinstock G.M."/>
            <person name="Blattner F.R."/>
        </authorList>
    </citation>
    <scope>NUCLEOTIDE SEQUENCE [LARGE SCALE GENOMIC DNA]</scope>
    <source>
        <strain>K12 / DH10B</strain>
    </source>
</reference>
<dbReference type="EMBL" id="CP000948">
    <property type="protein sequence ID" value="ACB05133.1"/>
    <property type="molecule type" value="Genomic_DNA"/>
</dbReference>
<dbReference type="RefSeq" id="WP_001026276.1">
    <property type="nucleotide sequence ID" value="NC_010473.1"/>
</dbReference>
<dbReference type="BMRB" id="B1XDP6"/>
<dbReference type="SMR" id="B1XDP6"/>
<dbReference type="KEGG" id="ecd:ECDH10B_4335"/>
<dbReference type="HOGENOM" id="CLU_132825_1_1_6"/>
<dbReference type="GO" id="GO:0005737">
    <property type="term" value="C:cytoplasm"/>
    <property type="evidence" value="ECO:0007669"/>
    <property type="project" value="UniProtKB-SubCell"/>
</dbReference>
<dbReference type="GO" id="GO:0005524">
    <property type="term" value="F:ATP binding"/>
    <property type="evidence" value="ECO:0007669"/>
    <property type="project" value="InterPro"/>
</dbReference>
<dbReference type="GO" id="GO:0046872">
    <property type="term" value="F:metal ion binding"/>
    <property type="evidence" value="ECO:0007669"/>
    <property type="project" value="TreeGrafter"/>
</dbReference>
<dbReference type="GO" id="GO:0044183">
    <property type="term" value="F:protein folding chaperone"/>
    <property type="evidence" value="ECO:0007669"/>
    <property type="project" value="InterPro"/>
</dbReference>
<dbReference type="GO" id="GO:0051087">
    <property type="term" value="F:protein-folding chaperone binding"/>
    <property type="evidence" value="ECO:0007669"/>
    <property type="project" value="TreeGrafter"/>
</dbReference>
<dbReference type="GO" id="GO:0051082">
    <property type="term" value="F:unfolded protein binding"/>
    <property type="evidence" value="ECO:0007669"/>
    <property type="project" value="TreeGrafter"/>
</dbReference>
<dbReference type="GO" id="GO:0051085">
    <property type="term" value="P:chaperone cofactor-dependent protein refolding"/>
    <property type="evidence" value="ECO:0007669"/>
    <property type="project" value="TreeGrafter"/>
</dbReference>
<dbReference type="CDD" id="cd00320">
    <property type="entry name" value="cpn10"/>
    <property type="match status" value="1"/>
</dbReference>
<dbReference type="FunFam" id="2.30.33.40:FF:000001">
    <property type="entry name" value="10 kDa chaperonin"/>
    <property type="match status" value="1"/>
</dbReference>
<dbReference type="Gene3D" id="2.30.33.40">
    <property type="entry name" value="GroES chaperonin"/>
    <property type="match status" value="1"/>
</dbReference>
<dbReference type="HAMAP" id="MF_00580">
    <property type="entry name" value="CH10"/>
    <property type="match status" value="1"/>
</dbReference>
<dbReference type="InterPro" id="IPR020818">
    <property type="entry name" value="Chaperonin_GroES"/>
</dbReference>
<dbReference type="InterPro" id="IPR037124">
    <property type="entry name" value="Chaperonin_GroES_sf"/>
</dbReference>
<dbReference type="InterPro" id="IPR018369">
    <property type="entry name" value="Chaprnonin_Cpn10_CS"/>
</dbReference>
<dbReference type="InterPro" id="IPR011032">
    <property type="entry name" value="GroES-like_sf"/>
</dbReference>
<dbReference type="NCBIfam" id="NF001526">
    <property type="entry name" value="PRK00364.1-1"/>
    <property type="match status" value="1"/>
</dbReference>
<dbReference type="NCBIfam" id="NF001527">
    <property type="entry name" value="PRK00364.1-2"/>
    <property type="match status" value="1"/>
</dbReference>
<dbReference type="NCBIfam" id="NF001531">
    <property type="entry name" value="PRK00364.2-2"/>
    <property type="match status" value="1"/>
</dbReference>
<dbReference type="PANTHER" id="PTHR10772">
    <property type="entry name" value="10 KDA HEAT SHOCK PROTEIN"/>
    <property type="match status" value="1"/>
</dbReference>
<dbReference type="PANTHER" id="PTHR10772:SF58">
    <property type="entry name" value="CO-CHAPERONIN GROES"/>
    <property type="match status" value="1"/>
</dbReference>
<dbReference type="Pfam" id="PF00166">
    <property type="entry name" value="Cpn10"/>
    <property type="match status" value="1"/>
</dbReference>
<dbReference type="PRINTS" id="PR00297">
    <property type="entry name" value="CHAPERONIN10"/>
</dbReference>
<dbReference type="SMART" id="SM00883">
    <property type="entry name" value="Cpn10"/>
    <property type="match status" value="1"/>
</dbReference>
<dbReference type="SUPFAM" id="SSF50129">
    <property type="entry name" value="GroES-like"/>
    <property type="match status" value="1"/>
</dbReference>
<dbReference type="PROSITE" id="PS00681">
    <property type="entry name" value="CHAPERONINS_CPN10"/>
    <property type="match status" value="1"/>
</dbReference>